<organism>
    <name type="scientific">Homo sapiens</name>
    <name type="common">Human</name>
    <dbReference type="NCBI Taxonomy" id="9606"/>
    <lineage>
        <taxon>Eukaryota</taxon>
        <taxon>Metazoa</taxon>
        <taxon>Chordata</taxon>
        <taxon>Craniata</taxon>
        <taxon>Vertebrata</taxon>
        <taxon>Euteleostomi</taxon>
        <taxon>Mammalia</taxon>
        <taxon>Eutheria</taxon>
        <taxon>Euarchontoglires</taxon>
        <taxon>Primates</taxon>
        <taxon>Haplorrhini</taxon>
        <taxon>Catarrhini</taxon>
        <taxon>Hominidae</taxon>
        <taxon>Homo</taxon>
    </lineage>
</organism>
<name>GSG1_HUMAN</name>
<evidence type="ECO:0000250" key="1"/>
<evidence type="ECO:0000255" key="2"/>
<evidence type="ECO:0000269" key="3">
    <source>
    </source>
</evidence>
<evidence type="ECO:0000303" key="4">
    <source>
    </source>
</evidence>
<evidence type="ECO:0000303" key="5">
    <source>
    </source>
</evidence>
<evidence type="ECO:0000303" key="6">
    <source>
    </source>
</evidence>
<evidence type="ECO:0000305" key="7"/>
<feature type="chain" id="PRO_0000329461" description="Germ cell-specific gene 1 protein">
    <location>
        <begin position="1"/>
        <end position="349"/>
    </location>
</feature>
<feature type="transmembrane region" description="Helical" evidence="2">
    <location>
        <begin position="20"/>
        <end position="40"/>
    </location>
</feature>
<feature type="transmembrane region" description="Helical" evidence="2">
    <location>
        <begin position="158"/>
        <end position="178"/>
    </location>
</feature>
<feature type="transmembrane region" description="Helical" evidence="2">
    <location>
        <begin position="189"/>
        <end position="209"/>
    </location>
</feature>
<feature type="transmembrane region" description="Helical" evidence="2">
    <location>
        <begin position="233"/>
        <end position="253"/>
    </location>
</feature>
<feature type="splice variant" id="VSP_032992" description="In isoform 6 and isoform 7." evidence="5 6">
    <original>MAK</original>
    <variation>MSDPSQLTQNVCLTQE</variation>
    <location>
        <begin position="1"/>
        <end position="3"/>
    </location>
</feature>
<feature type="splice variant" id="VSP_032993" description="In isoform 3, isoform 4, isoform 5, isoform 6 and isoform 8." evidence="4 5 6">
    <location>
        <begin position="109"/>
        <end position="131"/>
    </location>
</feature>
<feature type="splice variant" id="VSP_032994" description="In isoform 4." evidence="4 5 6">
    <original>EILWLSLGTQITYIGLQFISFLLLLTDLLLTGNPACGLKLSAFAAVSSVLSGLLGMVAHMMYSQVFQATVNLGPEDWRPHVWNYGWAFYMAWLSFTCCMASAVTTFNTYTRMVLEFKCKHSKSFKENPNCLPHHHQCFPRRLSSAAPTVGPLTSYHQYHNQPIHSVSEGVDFYSELRNKGFQRGASQELKEAVRSSVEEEQC</original>
    <variation>GEKGLLEFATLQGPCHPTLRFGGKRLMEKASLPSPPLGLCGKNPMVIPGNADHLHRTSIHQLPPATNRLATHWEPCLWAQTERLCCCFLCPVRSPGDGGPHDVFTSLPSDCQLGSRRLETTCLELWLGLLHGLALLHLLHGVGCHHLQHVHQDGAGVQVQA</variation>
    <location>
        <begin position="148"/>
        <end position="349"/>
    </location>
</feature>
<feature type="splice variant" id="VSP_032995" description="In isoform 7." evidence="5">
    <original>EILWLSLGTQITYIGLQFISFLLLLTDLLLTGNPACGLKLSAFAAVSSVLSGLLGMVAHMMYSQVFQATVNLGPEDWRPHVWNYGWAFYMAWLSFTCCMASAVTTFNTYTRMVLEFKCKHSKSFKENPNCLPHHHQCFPRRLSSAAPTVGPLTSYHQYHNQPIHSVSEGVDFYSELRNKGFQRGASQELKEAVRSSVEEEQC</original>
    <variation>GEKGLLEFATLQGPCHPTLRFGGKRLMEKASLPSPPLGLCGKNPMVIPGNADHLHRTSIHQLPPATNRLATHWEPCLWAQTERLCCCFLCPVRSPGDGGPHDVFTSLPSDCQLGSRRLETTCLELWLGLLHGLALLHLLHGVGCHHLQHVHQDGAGVQVQPPPWVL</variation>
    <location>
        <begin position="148"/>
        <end position="349"/>
    </location>
</feature>
<feature type="splice variant" id="VSP_032996" description="In isoform 8." evidence="5">
    <original>EILWLSLGTQITYIGLQFISFLLLLTDLLLTGNPACGLKLSAFAAVSSVLSGLLGMVAHMMYSQVFQATVNLGPEDWRPHVWNYGWAFYMAWLSFTCCMASAVTTFNTYTRMVLEFKCKHSKSFKENPNCLPH</original>
    <variation>GEKGLLEFATLQGPCHPTLRFGGKRLMEKASLPSPPLGLCGKNPMVIPGNADHLHRTSTHQLPPATNRLATHWEPCLWAQTERLCCCFLCPVRSPGDGGPHDVFTSLPSDCQLGSRRLETTCLELWLGLLHGLALLHLLHGVGCHHLQHV</variation>
    <location>
        <begin position="148"/>
        <end position="280"/>
    </location>
</feature>
<feature type="splice variant" id="VSP_032997" description="In isoform 2 and isoform 5." evidence="5 6">
    <location>
        <begin position="148"/>
        <end position="198"/>
    </location>
</feature>
<feature type="sequence variant" id="VAR_042684" description="In dbSNP:rs2306765." evidence="3">
    <original>F</original>
    <variation>L</variation>
    <location>
        <position position="39"/>
    </location>
</feature>
<feature type="sequence variant" id="VAR_042685" description="In dbSNP:rs11546332.">
    <original>G</original>
    <variation>V</variation>
    <location>
        <position position="67"/>
    </location>
</feature>
<feature type="sequence conflict" description="In Ref. 2; BAC11548." evidence="7" ref="2">
    <original>S</original>
    <variation>P</variation>
    <location>
        <position position="32"/>
    </location>
</feature>
<feature type="sequence conflict" description="In Ref. 2; BAC11540." evidence="7" ref="2">
    <original>M</original>
    <variation>V</variation>
    <location>
        <position position="259"/>
    </location>
</feature>
<comment type="function">
    <text evidence="1">May cause the redistribution of PAPOLB from the cytosol to the endoplasmic reticulum.</text>
</comment>
<comment type="subunit">
    <text evidence="1">Interacts with PAPOLB.</text>
</comment>
<comment type="interaction">
    <interactant intactId="EBI-10239244">
        <id>Q2KHT4</id>
    </interactant>
    <interactant intactId="EBI-355744">
        <id>Q12933</id>
        <label>TRAF2</label>
    </interactant>
    <organismsDiffer>false</organismsDiffer>
    <experiments>3</experiments>
</comment>
<comment type="interaction">
    <interactant intactId="EBI-12951679">
        <id>Q2KHT4-3</id>
    </interactant>
    <interactant intactId="EBI-638194">
        <id>P53365</id>
        <label>ARFIP2</label>
    </interactant>
    <organismsDiffer>false</organismsDiffer>
    <experiments>3</experiments>
</comment>
<comment type="interaction">
    <interactant intactId="EBI-12951679">
        <id>Q2KHT4-3</id>
    </interactant>
    <interactant intactId="EBI-12156897">
        <id>Q9BXU8</id>
        <label>FTHL17</label>
    </interactant>
    <organismsDiffer>false</organismsDiffer>
    <experiments>3</experiments>
</comment>
<comment type="interaction">
    <interactant intactId="EBI-12951679">
        <id>Q2KHT4-3</id>
    </interactant>
    <interactant intactId="EBI-11988931">
        <id>Q96C03-3</id>
        <label>MIEF2</label>
    </interactant>
    <organismsDiffer>false</organismsDiffer>
    <experiments>3</experiments>
</comment>
<comment type="interaction">
    <interactant intactId="EBI-12951679">
        <id>Q2KHT4-3</id>
    </interactant>
    <interactant intactId="EBI-14223623">
        <id>Q9UKF7-2</id>
        <label>PITPNC1</label>
    </interactant>
    <organismsDiffer>false</organismsDiffer>
    <experiments>3</experiments>
</comment>
<comment type="interaction">
    <interactant intactId="EBI-12951679">
        <id>Q2KHT4-3</id>
    </interactant>
    <interactant intactId="EBI-727004">
        <id>O00560</id>
        <label>SDCBP</label>
    </interactant>
    <organismsDiffer>false</organismsDiffer>
    <experiments>3</experiments>
</comment>
<comment type="interaction">
    <interactant intactId="EBI-12951679">
        <id>Q2KHT4-3</id>
    </interactant>
    <interactant intactId="EBI-2872322">
        <id>Q9H0W8</id>
        <label>SMG9</label>
    </interactant>
    <organismsDiffer>false</organismsDiffer>
    <experiments>3</experiments>
</comment>
<comment type="interaction">
    <interactant intactId="EBI-12951679">
        <id>Q2KHT4-3</id>
    </interactant>
    <interactant intactId="EBI-10238936">
        <id>Q17RD7</id>
        <label>SYT16</label>
    </interactant>
    <organismsDiffer>false</organismsDiffer>
    <experiments>3</experiments>
</comment>
<comment type="subcellular location">
    <subcellularLocation>
        <location evidence="1">Endoplasmic reticulum membrane</location>
        <topology evidence="1">Multi-pass membrane protein</topology>
    </subcellularLocation>
    <text evidence="1">Colocalizes with PAPOLB in the endoplasmic reticulum.</text>
</comment>
<comment type="alternative products">
    <event type="alternative splicing"/>
    <isoform>
        <id>Q2KHT4-1</id>
        <name>1</name>
        <sequence type="displayed"/>
    </isoform>
    <isoform>
        <id>Q2KHT4-2</id>
        <name>2</name>
        <sequence type="described" ref="VSP_032997"/>
    </isoform>
    <isoform>
        <id>Q2KHT4-3</id>
        <name>3</name>
        <sequence type="described" ref="VSP_032993"/>
    </isoform>
    <isoform>
        <id>Q2KHT4-4</id>
        <name>4</name>
        <sequence type="described" ref="VSP_032993 VSP_032994"/>
    </isoform>
    <isoform>
        <id>Q2KHT4-5</id>
        <name>5</name>
        <sequence type="described" ref="VSP_032993 VSP_032997"/>
    </isoform>
    <isoform>
        <id>Q2KHT4-6</id>
        <name>6</name>
        <sequence type="described" ref="VSP_032992 VSP_032993"/>
    </isoform>
    <isoform>
        <id>Q2KHT4-7</id>
        <name>7</name>
        <sequence type="described" ref="VSP_032992 VSP_032995"/>
    </isoform>
    <isoform>
        <id>Q2KHT4-8</id>
        <name>8</name>
        <sequence type="described" ref="VSP_032993 VSP_032996"/>
    </isoform>
</comment>
<comment type="similarity">
    <text evidence="7">Belongs to the GSG1 family.</text>
</comment>
<comment type="sequence caution" evidence="7">
    <conflict type="erroneous initiation">
        <sequence resource="EMBL-CDS" id="AAH01796"/>
    </conflict>
</comment>
<comment type="sequence caution" evidence="7">
    <conflict type="erroneous initiation">
        <sequence resource="EMBL-CDS" id="AAH33854"/>
    </conflict>
</comment>
<accession>Q2KHT4</accession>
<accession>Q8N4M3</accession>
<accession>Q8NBR4</accession>
<accession>Q8NBS0</accession>
<accession>Q8NBT1</accession>
<accession>Q96LP9</accession>
<accession>Q96SI6</accession>
<accession>Q9BUY4</accession>
<protein>
    <recommendedName>
        <fullName>Germ cell-specific gene 1 protein</fullName>
    </recommendedName>
</protein>
<dbReference type="EMBL" id="AY358513">
    <property type="protein sequence ID" value="AAQ88877.1"/>
    <property type="molecule type" value="mRNA"/>
</dbReference>
<dbReference type="EMBL" id="AK027894">
    <property type="protein sequence ID" value="BAB55437.1"/>
    <property type="molecule type" value="mRNA"/>
</dbReference>
<dbReference type="EMBL" id="AK058045">
    <property type="protein sequence ID" value="BAB71638.1"/>
    <property type="molecule type" value="mRNA"/>
</dbReference>
<dbReference type="EMBL" id="AK075288">
    <property type="protein sequence ID" value="BAC11524.1"/>
    <property type="molecule type" value="mRNA"/>
</dbReference>
<dbReference type="EMBL" id="AK075311">
    <property type="protein sequence ID" value="BAC11540.1"/>
    <property type="molecule type" value="mRNA"/>
</dbReference>
<dbReference type="EMBL" id="AK075322">
    <property type="protein sequence ID" value="BAC11548.1"/>
    <property type="molecule type" value="mRNA"/>
</dbReference>
<dbReference type="EMBL" id="AC023790">
    <property type="status" value="NOT_ANNOTATED_CDS"/>
    <property type="molecule type" value="Genomic_DNA"/>
</dbReference>
<dbReference type="EMBL" id="AC079628">
    <property type="status" value="NOT_ANNOTATED_CDS"/>
    <property type="molecule type" value="Genomic_DNA"/>
</dbReference>
<dbReference type="EMBL" id="CH471094">
    <property type="protein sequence ID" value="EAW96299.1"/>
    <property type="molecule type" value="Genomic_DNA"/>
</dbReference>
<dbReference type="EMBL" id="BC001796">
    <property type="protein sequence ID" value="AAH01796.1"/>
    <property type="status" value="ALT_INIT"/>
    <property type="molecule type" value="mRNA"/>
</dbReference>
<dbReference type="EMBL" id="BC033854">
    <property type="protein sequence ID" value="AAH33854.1"/>
    <property type="status" value="ALT_INIT"/>
    <property type="molecule type" value="mRNA"/>
</dbReference>
<dbReference type="EMBL" id="BC112896">
    <property type="protein sequence ID" value="AAI12897.1"/>
    <property type="molecule type" value="mRNA"/>
</dbReference>
<dbReference type="CCDS" id="CCDS44835.1">
    <molecule id="Q2KHT4-3"/>
</dbReference>
<dbReference type="CCDS" id="CCDS55806.1">
    <molecule id="Q2KHT4-5"/>
</dbReference>
<dbReference type="CCDS" id="CCDS55807.1">
    <molecule id="Q2KHT4-2"/>
</dbReference>
<dbReference type="CCDS" id="CCDS55808.1">
    <molecule id="Q2KHT4-6"/>
</dbReference>
<dbReference type="CCDS" id="CCDS8659.2">
    <molecule id="Q2KHT4-4"/>
</dbReference>
<dbReference type="RefSeq" id="NP_001074023.1">
    <property type="nucleotide sequence ID" value="NM_001080554.2"/>
</dbReference>
<dbReference type="RefSeq" id="NP_001193771.1">
    <molecule id="Q2KHT4-6"/>
    <property type="nucleotide sequence ID" value="NM_001206842.3"/>
</dbReference>
<dbReference type="RefSeq" id="NP_001193772.1">
    <molecule id="Q2KHT4-2"/>
    <property type="nucleotide sequence ID" value="NM_001206843.3"/>
</dbReference>
<dbReference type="RefSeq" id="NP_001193774.1">
    <molecule id="Q2KHT4-5"/>
    <property type="nucleotide sequence ID" value="NM_001206845.3"/>
</dbReference>
<dbReference type="RefSeq" id="NP_001354936.1">
    <molecule id="Q2KHT4-1"/>
    <property type="nucleotide sequence ID" value="NM_001368007.2"/>
</dbReference>
<dbReference type="RefSeq" id="NP_112579.2">
    <molecule id="Q2KHT4-4"/>
    <property type="nucleotide sequence ID" value="NM_031289.5"/>
</dbReference>
<dbReference type="RefSeq" id="NP_722545.2">
    <molecule id="Q2KHT4-3"/>
    <property type="nucleotide sequence ID" value="NM_153823.5"/>
</dbReference>
<dbReference type="SMR" id="Q2KHT4"/>
<dbReference type="BioGRID" id="123647">
    <property type="interactions" value="14"/>
</dbReference>
<dbReference type="FunCoup" id="Q2KHT4">
    <property type="interactions" value="250"/>
</dbReference>
<dbReference type="IntAct" id="Q2KHT4">
    <property type="interactions" value="10"/>
</dbReference>
<dbReference type="STRING" id="9606.ENSP00000405032"/>
<dbReference type="TCDB" id="8.A.16.5.1">
    <property type="family name" value="the ca(+) channel auxiliary subunit Gama1-Gama8 (ccaGama) family"/>
</dbReference>
<dbReference type="PhosphoSitePlus" id="Q2KHT4"/>
<dbReference type="BioMuta" id="GSG1"/>
<dbReference type="DMDM" id="187471163"/>
<dbReference type="jPOST" id="Q2KHT4"/>
<dbReference type="MassIVE" id="Q2KHT4"/>
<dbReference type="PaxDb" id="9606-ENSP00000405032"/>
<dbReference type="PeptideAtlas" id="Q2KHT4"/>
<dbReference type="ProteomicsDB" id="61312">
    <molecule id="Q2KHT4-1"/>
</dbReference>
<dbReference type="ProteomicsDB" id="61313">
    <molecule id="Q2KHT4-2"/>
</dbReference>
<dbReference type="ProteomicsDB" id="61314">
    <molecule id="Q2KHT4-3"/>
</dbReference>
<dbReference type="ProteomicsDB" id="61315">
    <molecule id="Q2KHT4-4"/>
</dbReference>
<dbReference type="ProteomicsDB" id="61316">
    <molecule id="Q2KHT4-5"/>
</dbReference>
<dbReference type="ProteomicsDB" id="61317">
    <molecule id="Q2KHT4-6"/>
</dbReference>
<dbReference type="ProteomicsDB" id="61318">
    <molecule id="Q2KHT4-7"/>
</dbReference>
<dbReference type="ProteomicsDB" id="61319">
    <molecule id="Q2KHT4-8"/>
</dbReference>
<dbReference type="Antibodypedia" id="23587">
    <property type="antibodies" value="134 antibodies from 18 providers"/>
</dbReference>
<dbReference type="DNASU" id="83445"/>
<dbReference type="Ensembl" id="ENST00000337630.10">
    <molecule id="Q2KHT4-3"/>
    <property type="protein sequence ID" value="ENSP00000336816.6"/>
    <property type="gene ID" value="ENSG00000111305.19"/>
</dbReference>
<dbReference type="Ensembl" id="ENST00000396302.7">
    <molecule id="Q2KHT4-4"/>
    <property type="protein sequence ID" value="ENSP00000379596.3"/>
    <property type="gene ID" value="ENSG00000111305.19"/>
</dbReference>
<dbReference type="Ensembl" id="ENST00000432710.7">
    <molecule id="Q2KHT4-6"/>
    <property type="protein sequence ID" value="ENSP00000405032.2"/>
    <property type="gene ID" value="ENSG00000111305.19"/>
</dbReference>
<dbReference type="Ensembl" id="ENST00000457134.6">
    <molecule id="Q2KHT4-5"/>
    <property type="protein sequence ID" value="ENSP00000398384.2"/>
    <property type="gene ID" value="ENSG00000111305.19"/>
</dbReference>
<dbReference type="Ensembl" id="ENST00000537302.5">
    <molecule id="Q2KHT4-2"/>
    <property type="protein sequence ID" value="ENSP00000441718.1"/>
    <property type="gene ID" value="ENSG00000111305.19"/>
</dbReference>
<dbReference type="GeneID" id="83445"/>
<dbReference type="KEGG" id="hsa:83445"/>
<dbReference type="UCSC" id="uc001rbj.4">
    <molecule id="Q2KHT4-1"/>
    <property type="organism name" value="human"/>
</dbReference>
<dbReference type="AGR" id="HGNC:19716"/>
<dbReference type="CTD" id="83445"/>
<dbReference type="DisGeNET" id="83445"/>
<dbReference type="GeneCards" id="GSG1"/>
<dbReference type="HGNC" id="HGNC:19716">
    <property type="gene designation" value="GSG1"/>
</dbReference>
<dbReference type="HPA" id="ENSG00000111305">
    <property type="expression patterns" value="Tissue enriched (testis)"/>
</dbReference>
<dbReference type="neXtProt" id="NX_Q2KHT4"/>
<dbReference type="OpenTargets" id="ENSG00000111305"/>
<dbReference type="PharmGKB" id="PA134868096"/>
<dbReference type="VEuPathDB" id="HostDB:ENSG00000111305"/>
<dbReference type="eggNOG" id="ENOG502QRSH">
    <property type="taxonomic scope" value="Eukaryota"/>
</dbReference>
<dbReference type="GeneTree" id="ENSGT01050000244814"/>
<dbReference type="HOGENOM" id="CLU_063057_0_0_1"/>
<dbReference type="InParanoid" id="Q2KHT4"/>
<dbReference type="OrthoDB" id="10001768at2759"/>
<dbReference type="PAN-GO" id="Q2KHT4">
    <property type="GO annotations" value="1 GO annotation based on evolutionary models"/>
</dbReference>
<dbReference type="PhylomeDB" id="Q2KHT4"/>
<dbReference type="TreeFam" id="TF331388"/>
<dbReference type="PathwayCommons" id="Q2KHT4"/>
<dbReference type="SignaLink" id="Q2KHT4"/>
<dbReference type="BioGRID-ORCS" id="83445">
    <property type="hits" value="10 hits in 1147 CRISPR screens"/>
</dbReference>
<dbReference type="ChiTaRS" id="GSG1">
    <property type="organism name" value="human"/>
</dbReference>
<dbReference type="GenomeRNAi" id="83445"/>
<dbReference type="Pharos" id="Q2KHT4">
    <property type="development level" value="Tdark"/>
</dbReference>
<dbReference type="PRO" id="PR:Q2KHT4"/>
<dbReference type="Proteomes" id="UP000005640">
    <property type="component" value="Chromosome 12"/>
</dbReference>
<dbReference type="RNAct" id="Q2KHT4">
    <property type="molecule type" value="protein"/>
</dbReference>
<dbReference type="Bgee" id="ENSG00000111305">
    <property type="expression patterns" value="Expressed in left testis and 111 other cell types or tissues"/>
</dbReference>
<dbReference type="ExpressionAtlas" id="Q2KHT4">
    <property type="expression patterns" value="baseline and differential"/>
</dbReference>
<dbReference type="GO" id="GO:0005789">
    <property type="term" value="C:endoplasmic reticulum membrane"/>
    <property type="evidence" value="ECO:0007669"/>
    <property type="project" value="UniProtKB-SubCell"/>
</dbReference>
<dbReference type="GO" id="GO:0005886">
    <property type="term" value="C:plasma membrane"/>
    <property type="evidence" value="ECO:0000318"/>
    <property type="project" value="GO_Central"/>
</dbReference>
<dbReference type="FunFam" id="1.20.140.150:FF:000034">
    <property type="entry name" value="Germ cell associated 1"/>
    <property type="match status" value="1"/>
</dbReference>
<dbReference type="Gene3D" id="1.20.140.150">
    <property type="match status" value="1"/>
</dbReference>
<dbReference type="InterPro" id="IPR012478">
    <property type="entry name" value="GSG-1"/>
</dbReference>
<dbReference type="InterPro" id="IPR050579">
    <property type="entry name" value="PMP-22/EMP/MP20-like"/>
</dbReference>
<dbReference type="PANTHER" id="PTHR10671">
    <property type="entry name" value="EPITHELIAL MEMBRANE PROTEIN-RELATED"/>
    <property type="match status" value="1"/>
</dbReference>
<dbReference type="PANTHER" id="PTHR10671:SF43">
    <property type="entry name" value="GERM CELL-SPECIFIC GENE 1 PROTEIN"/>
    <property type="match status" value="1"/>
</dbReference>
<dbReference type="Pfam" id="PF07803">
    <property type="entry name" value="GSG-1"/>
    <property type="match status" value="1"/>
</dbReference>
<proteinExistence type="evidence at protein level"/>
<sequence>MAKMELSKAFSGQRTLLSAILSMLSLSFSTTSLLSNYWFVGTQKVPKPLCEKGLAAKCFDMPVSLDGDTNTSTQEVVQYNWETGDDRFSFRSFRSGMWLSCEETVEEPALLHPQSWKQFRALRSSGTAAAKGERCRSFIELTPPAKREILWLSLGTQITYIGLQFISFLLLLTDLLLTGNPACGLKLSAFAAVSSVLSGLLGMVAHMMYSQVFQATVNLGPEDWRPHVWNYGWAFYMAWLSFTCCMASAVTTFNTYTRMVLEFKCKHSKSFKENPNCLPHHHQCFPRRLSSAAPTVGPLTSYHQYHNQPIHSVSEGVDFYSELRNKGFQRGASQELKEAVRSSVEEEQC</sequence>
<gene>
    <name type="primary">GSG1</name>
    <name type="ORF">UNQ709/PRO1360</name>
</gene>
<keyword id="KW-0025">Alternative splicing</keyword>
<keyword id="KW-0256">Endoplasmic reticulum</keyword>
<keyword id="KW-0472">Membrane</keyword>
<keyword id="KW-1267">Proteomics identification</keyword>
<keyword id="KW-1185">Reference proteome</keyword>
<keyword id="KW-0812">Transmembrane</keyword>
<keyword id="KW-1133">Transmembrane helix</keyword>
<reference key="1">
    <citation type="journal article" date="2003" name="Genome Res.">
        <title>The secreted protein discovery initiative (SPDI), a large-scale effort to identify novel human secreted and transmembrane proteins: a bioinformatics assessment.</title>
        <authorList>
            <person name="Clark H.F."/>
            <person name="Gurney A.L."/>
            <person name="Abaya E."/>
            <person name="Baker K."/>
            <person name="Baldwin D.T."/>
            <person name="Brush J."/>
            <person name="Chen J."/>
            <person name="Chow B."/>
            <person name="Chui C."/>
            <person name="Crowley C."/>
            <person name="Currell B."/>
            <person name="Deuel B."/>
            <person name="Dowd P."/>
            <person name="Eaton D."/>
            <person name="Foster J.S."/>
            <person name="Grimaldi C."/>
            <person name="Gu Q."/>
            <person name="Hass P.E."/>
            <person name="Heldens S."/>
            <person name="Huang A."/>
            <person name="Kim H.S."/>
            <person name="Klimowski L."/>
            <person name="Jin Y."/>
            <person name="Johnson S."/>
            <person name="Lee J."/>
            <person name="Lewis L."/>
            <person name="Liao D."/>
            <person name="Mark M.R."/>
            <person name="Robbie E."/>
            <person name="Sanchez C."/>
            <person name="Schoenfeld J."/>
            <person name="Seshagiri S."/>
            <person name="Simmons L."/>
            <person name="Singh J."/>
            <person name="Smith V."/>
            <person name="Stinson J."/>
            <person name="Vagts A."/>
            <person name="Vandlen R.L."/>
            <person name="Watanabe C."/>
            <person name="Wieand D."/>
            <person name="Woods K."/>
            <person name="Xie M.-H."/>
            <person name="Yansura D.G."/>
            <person name="Yi S."/>
            <person name="Yu G."/>
            <person name="Yuan J."/>
            <person name="Zhang M."/>
            <person name="Zhang Z."/>
            <person name="Goddard A.D."/>
            <person name="Wood W.I."/>
            <person name="Godowski P.J."/>
            <person name="Gray A.M."/>
        </authorList>
    </citation>
    <scope>NUCLEOTIDE SEQUENCE [LARGE SCALE MRNA] (ISOFORM 4)</scope>
</reference>
<reference key="2">
    <citation type="journal article" date="2004" name="Nat. Genet.">
        <title>Complete sequencing and characterization of 21,243 full-length human cDNAs.</title>
        <authorList>
            <person name="Ota T."/>
            <person name="Suzuki Y."/>
            <person name="Nishikawa T."/>
            <person name="Otsuki T."/>
            <person name="Sugiyama T."/>
            <person name="Irie R."/>
            <person name="Wakamatsu A."/>
            <person name="Hayashi K."/>
            <person name="Sato H."/>
            <person name="Nagai K."/>
            <person name="Kimura K."/>
            <person name="Makita H."/>
            <person name="Sekine M."/>
            <person name="Obayashi M."/>
            <person name="Nishi T."/>
            <person name="Shibahara T."/>
            <person name="Tanaka T."/>
            <person name="Ishii S."/>
            <person name="Yamamoto J."/>
            <person name="Saito K."/>
            <person name="Kawai Y."/>
            <person name="Isono Y."/>
            <person name="Nakamura Y."/>
            <person name="Nagahari K."/>
            <person name="Murakami K."/>
            <person name="Yasuda T."/>
            <person name="Iwayanagi T."/>
            <person name="Wagatsuma M."/>
            <person name="Shiratori A."/>
            <person name="Sudo H."/>
            <person name="Hosoiri T."/>
            <person name="Kaku Y."/>
            <person name="Kodaira H."/>
            <person name="Kondo H."/>
            <person name="Sugawara M."/>
            <person name="Takahashi M."/>
            <person name="Kanda K."/>
            <person name="Yokoi T."/>
            <person name="Furuya T."/>
            <person name="Kikkawa E."/>
            <person name="Omura Y."/>
            <person name="Abe K."/>
            <person name="Kamihara K."/>
            <person name="Katsuta N."/>
            <person name="Sato K."/>
            <person name="Tanikawa M."/>
            <person name="Yamazaki M."/>
            <person name="Ninomiya K."/>
            <person name="Ishibashi T."/>
            <person name="Yamashita H."/>
            <person name="Murakawa K."/>
            <person name="Fujimori K."/>
            <person name="Tanai H."/>
            <person name="Kimata M."/>
            <person name="Watanabe M."/>
            <person name="Hiraoka S."/>
            <person name="Chiba Y."/>
            <person name="Ishida S."/>
            <person name="Ono Y."/>
            <person name="Takiguchi S."/>
            <person name="Watanabe S."/>
            <person name="Yosida M."/>
            <person name="Hotuta T."/>
            <person name="Kusano J."/>
            <person name="Kanehori K."/>
            <person name="Takahashi-Fujii A."/>
            <person name="Hara H."/>
            <person name="Tanase T.-O."/>
            <person name="Nomura Y."/>
            <person name="Togiya S."/>
            <person name="Komai F."/>
            <person name="Hara R."/>
            <person name="Takeuchi K."/>
            <person name="Arita M."/>
            <person name="Imose N."/>
            <person name="Musashino K."/>
            <person name="Yuuki H."/>
            <person name="Oshima A."/>
            <person name="Sasaki N."/>
            <person name="Aotsuka S."/>
            <person name="Yoshikawa Y."/>
            <person name="Matsunawa H."/>
            <person name="Ichihara T."/>
            <person name="Shiohata N."/>
            <person name="Sano S."/>
            <person name="Moriya S."/>
            <person name="Momiyama H."/>
            <person name="Satoh N."/>
            <person name="Takami S."/>
            <person name="Terashima Y."/>
            <person name="Suzuki O."/>
            <person name="Nakagawa S."/>
            <person name="Senoh A."/>
            <person name="Mizoguchi H."/>
            <person name="Goto Y."/>
            <person name="Shimizu F."/>
            <person name="Wakebe H."/>
            <person name="Hishigaki H."/>
            <person name="Watanabe T."/>
            <person name="Sugiyama A."/>
            <person name="Takemoto M."/>
            <person name="Kawakami B."/>
            <person name="Yamazaki M."/>
            <person name="Watanabe K."/>
            <person name="Kumagai A."/>
            <person name="Itakura S."/>
            <person name="Fukuzumi Y."/>
            <person name="Fujimori Y."/>
            <person name="Komiyama M."/>
            <person name="Tashiro H."/>
            <person name="Tanigami A."/>
            <person name="Fujiwara T."/>
            <person name="Ono T."/>
            <person name="Yamada K."/>
            <person name="Fujii Y."/>
            <person name="Ozaki K."/>
            <person name="Hirao M."/>
            <person name="Ohmori Y."/>
            <person name="Kawabata A."/>
            <person name="Hikiji T."/>
            <person name="Kobatake N."/>
            <person name="Inagaki H."/>
            <person name="Ikema Y."/>
            <person name="Okamoto S."/>
            <person name="Okitani R."/>
            <person name="Kawakami T."/>
            <person name="Noguchi S."/>
            <person name="Itoh T."/>
            <person name="Shigeta K."/>
            <person name="Senba T."/>
            <person name="Matsumura K."/>
            <person name="Nakajima Y."/>
            <person name="Mizuno T."/>
            <person name="Morinaga M."/>
            <person name="Sasaki M."/>
            <person name="Togashi T."/>
            <person name="Oyama M."/>
            <person name="Hata H."/>
            <person name="Watanabe M."/>
            <person name="Komatsu T."/>
            <person name="Mizushima-Sugano J."/>
            <person name="Satoh T."/>
            <person name="Shirai Y."/>
            <person name="Takahashi Y."/>
            <person name="Nakagawa K."/>
            <person name="Okumura K."/>
            <person name="Nagase T."/>
            <person name="Nomura N."/>
            <person name="Kikuchi H."/>
            <person name="Masuho Y."/>
            <person name="Yamashita R."/>
            <person name="Nakai K."/>
            <person name="Yada T."/>
            <person name="Nakamura Y."/>
            <person name="Ohara O."/>
            <person name="Isogai T."/>
            <person name="Sugano S."/>
        </authorList>
    </citation>
    <scope>NUCLEOTIDE SEQUENCE [LARGE SCALE MRNA] (ISOFORMS 3; 4; 5; 7 AND 8)</scope>
    <source>
        <tissue>Retinoblastoma</tissue>
        <tissue>Testis</tissue>
    </source>
</reference>
<reference key="3">
    <citation type="journal article" date="2006" name="Nature">
        <title>The finished DNA sequence of human chromosome 12.</title>
        <authorList>
            <person name="Scherer S.E."/>
            <person name="Muzny D.M."/>
            <person name="Buhay C.J."/>
            <person name="Chen R."/>
            <person name="Cree A."/>
            <person name="Ding Y."/>
            <person name="Dugan-Rocha S."/>
            <person name="Gill R."/>
            <person name="Gunaratne P."/>
            <person name="Harris R.A."/>
            <person name="Hawes A.C."/>
            <person name="Hernandez J."/>
            <person name="Hodgson A.V."/>
            <person name="Hume J."/>
            <person name="Jackson A."/>
            <person name="Khan Z.M."/>
            <person name="Kovar-Smith C."/>
            <person name="Lewis L.R."/>
            <person name="Lozado R.J."/>
            <person name="Metzker M.L."/>
            <person name="Milosavljevic A."/>
            <person name="Miner G.R."/>
            <person name="Montgomery K.T."/>
            <person name="Morgan M.B."/>
            <person name="Nazareth L.V."/>
            <person name="Scott G."/>
            <person name="Sodergren E."/>
            <person name="Song X.-Z."/>
            <person name="Steffen D."/>
            <person name="Lovering R.C."/>
            <person name="Wheeler D.A."/>
            <person name="Worley K.C."/>
            <person name="Yuan Y."/>
            <person name="Zhang Z."/>
            <person name="Adams C.Q."/>
            <person name="Ansari-Lari M.A."/>
            <person name="Ayele M."/>
            <person name="Brown M.J."/>
            <person name="Chen G."/>
            <person name="Chen Z."/>
            <person name="Clerc-Blankenburg K.P."/>
            <person name="Davis C."/>
            <person name="Delgado O."/>
            <person name="Dinh H.H."/>
            <person name="Draper H."/>
            <person name="Gonzalez-Garay M.L."/>
            <person name="Havlak P."/>
            <person name="Jackson L.R."/>
            <person name="Jacob L.S."/>
            <person name="Kelly S.H."/>
            <person name="Li L."/>
            <person name="Li Z."/>
            <person name="Liu J."/>
            <person name="Liu W."/>
            <person name="Lu J."/>
            <person name="Maheshwari M."/>
            <person name="Nguyen B.-V."/>
            <person name="Okwuonu G.O."/>
            <person name="Pasternak S."/>
            <person name="Perez L.M."/>
            <person name="Plopper F.J.H."/>
            <person name="Santibanez J."/>
            <person name="Shen H."/>
            <person name="Tabor P.E."/>
            <person name="Verduzco D."/>
            <person name="Waldron L."/>
            <person name="Wang Q."/>
            <person name="Williams G.A."/>
            <person name="Zhang J."/>
            <person name="Zhou J."/>
            <person name="Allen C.C."/>
            <person name="Amin A.G."/>
            <person name="Anyalebechi V."/>
            <person name="Bailey M."/>
            <person name="Barbaria J.A."/>
            <person name="Bimage K.E."/>
            <person name="Bryant N.P."/>
            <person name="Burch P.E."/>
            <person name="Burkett C.E."/>
            <person name="Burrell K.L."/>
            <person name="Calderon E."/>
            <person name="Cardenas V."/>
            <person name="Carter K."/>
            <person name="Casias K."/>
            <person name="Cavazos I."/>
            <person name="Cavazos S.R."/>
            <person name="Ceasar H."/>
            <person name="Chacko J."/>
            <person name="Chan S.N."/>
            <person name="Chavez D."/>
            <person name="Christopoulos C."/>
            <person name="Chu J."/>
            <person name="Cockrell R."/>
            <person name="Cox C.D."/>
            <person name="Dang M."/>
            <person name="Dathorne S.R."/>
            <person name="David R."/>
            <person name="Davis C.M."/>
            <person name="Davy-Carroll L."/>
            <person name="Deshazo D.R."/>
            <person name="Donlin J.E."/>
            <person name="D'Souza L."/>
            <person name="Eaves K.A."/>
            <person name="Egan A."/>
            <person name="Emery-Cohen A.J."/>
            <person name="Escotto M."/>
            <person name="Flagg N."/>
            <person name="Forbes L.D."/>
            <person name="Gabisi A.M."/>
            <person name="Garza M."/>
            <person name="Hamilton C."/>
            <person name="Henderson N."/>
            <person name="Hernandez O."/>
            <person name="Hines S."/>
            <person name="Hogues M.E."/>
            <person name="Huang M."/>
            <person name="Idlebird D.G."/>
            <person name="Johnson R."/>
            <person name="Jolivet A."/>
            <person name="Jones S."/>
            <person name="Kagan R."/>
            <person name="King L.M."/>
            <person name="Leal B."/>
            <person name="Lebow H."/>
            <person name="Lee S."/>
            <person name="LeVan J.M."/>
            <person name="Lewis L.C."/>
            <person name="London P."/>
            <person name="Lorensuhewa L.M."/>
            <person name="Loulseged H."/>
            <person name="Lovett D.A."/>
            <person name="Lucier A."/>
            <person name="Lucier R.L."/>
            <person name="Ma J."/>
            <person name="Madu R.C."/>
            <person name="Mapua P."/>
            <person name="Martindale A.D."/>
            <person name="Martinez E."/>
            <person name="Massey E."/>
            <person name="Mawhiney S."/>
            <person name="Meador M.G."/>
            <person name="Mendez S."/>
            <person name="Mercado C."/>
            <person name="Mercado I.C."/>
            <person name="Merritt C.E."/>
            <person name="Miner Z.L."/>
            <person name="Minja E."/>
            <person name="Mitchell T."/>
            <person name="Mohabbat F."/>
            <person name="Mohabbat K."/>
            <person name="Montgomery B."/>
            <person name="Moore N."/>
            <person name="Morris S."/>
            <person name="Munidasa M."/>
            <person name="Ngo R.N."/>
            <person name="Nguyen N.B."/>
            <person name="Nickerson E."/>
            <person name="Nwaokelemeh O.O."/>
            <person name="Nwokenkwo S."/>
            <person name="Obregon M."/>
            <person name="Oguh M."/>
            <person name="Oragunye N."/>
            <person name="Oviedo R.J."/>
            <person name="Parish B.J."/>
            <person name="Parker D.N."/>
            <person name="Parrish J."/>
            <person name="Parks K.L."/>
            <person name="Paul H.A."/>
            <person name="Payton B.A."/>
            <person name="Perez A."/>
            <person name="Perrin W."/>
            <person name="Pickens A."/>
            <person name="Primus E.L."/>
            <person name="Pu L.-L."/>
            <person name="Puazo M."/>
            <person name="Quiles M.M."/>
            <person name="Quiroz J.B."/>
            <person name="Rabata D."/>
            <person name="Reeves K."/>
            <person name="Ruiz S.J."/>
            <person name="Shao H."/>
            <person name="Sisson I."/>
            <person name="Sonaike T."/>
            <person name="Sorelle R.P."/>
            <person name="Sutton A.E."/>
            <person name="Svatek A.F."/>
            <person name="Svetz L.A."/>
            <person name="Tamerisa K.S."/>
            <person name="Taylor T.R."/>
            <person name="Teague B."/>
            <person name="Thomas N."/>
            <person name="Thorn R.D."/>
            <person name="Trejos Z.Y."/>
            <person name="Trevino B.K."/>
            <person name="Ukegbu O.N."/>
            <person name="Urban J.B."/>
            <person name="Vasquez L.I."/>
            <person name="Vera V.A."/>
            <person name="Villasana D.M."/>
            <person name="Wang L."/>
            <person name="Ward-Moore S."/>
            <person name="Warren J.T."/>
            <person name="Wei X."/>
            <person name="White F."/>
            <person name="Williamson A.L."/>
            <person name="Wleczyk R."/>
            <person name="Wooden H.S."/>
            <person name="Wooden S.H."/>
            <person name="Yen J."/>
            <person name="Yoon L."/>
            <person name="Yoon V."/>
            <person name="Zorrilla S.E."/>
            <person name="Nelson D."/>
            <person name="Kucherlapati R."/>
            <person name="Weinstock G."/>
            <person name="Gibbs R.A."/>
        </authorList>
    </citation>
    <scope>NUCLEOTIDE SEQUENCE [LARGE SCALE GENOMIC DNA]</scope>
</reference>
<reference key="4">
    <citation type="submission" date="2005-07" db="EMBL/GenBank/DDBJ databases">
        <authorList>
            <person name="Mural R.J."/>
            <person name="Istrail S."/>
            <person name="Sutton G.G."/>
            <person name="Florea L."/>
            <person name="Halpern A.L."/>
            <person name="Mobarry C.M."/>
            <person name="Lippert R."/>
            <person name="Walenz B."/>
            <person name="Shatkay H."/>
            <person name="Dew I."/>
            <person name="Miller J.R."/>
            <person name="Flanigan M.J."/>
            <person name="Edwards N.J."/>
            <person name="Bolanos R."/>
            <person name="Fasulo D."/>
            <person name="Halldorsson B.V."/>
            <person name="Hannenhalli S."/>
            <person name="Turner R."/>
            <person name="Yooseph S."/>
            <person name="Lu F."/>
            <person name="Nusskern D.R."/>
            <person name="Shue B.C."/>
            <person name="Zheng X.H."/>
            <person name="Zhong F."/>
            <person name="Delcher A.L."/>
            <person name="Huson D.H."/>
            <person name="Kravitz S.A."/>
            <person name="Mouchard L."/>
            <person name="Reinert K."/>
            <person name="Remington K.A."/>
            <person name="Clark A.G."/>
            <person name="Waterman M.S."/>
            <person name="Eichler E.E."/>
            <person name="Adams M.D."/>
            <person name="Hunkapiller M.W."/>
            <person name="Myers E.W."/>
            <person name="Venter J.C."/>
        </authorList>
    </citation>
    <scope>NUCLEOTIDE SEQUENCE [LARGE SCALE GENOMIC DNA]</scope>
</reference>
<reference key="5">
    <citation type="journal article" date="2004" name="Genome Res.">
        <title>The status, quality, and expansion of the NIH full-length cDNA project: the Mammalian Gene Collection (MGC).</title>
        <authorList>
            <consortium name="The MGC Project Team"/>
        </authorList>
    </citation>
    <scope>NUCLEOTIDE SEQUENCE [LARGE SCALE MRNA] (ISOFORMS 2; 4 AND 6)</scope>
    <scope>VARIANT LEU-39</scope>
    <source>
        <tissue>Brain</tissue>
        <tissue>Eye</tissue>
    </source>
</reference>